<evidence type="ECO:0000255" key="1">
    <source>
        <dbReference type="HAMAP-Rule" id="MF_01552"/>
    </source>
</evidence>
<organism>
    <name type="scientific">Shewanella baltica (strain OS195)</name>
    <dbReference type="NCBI Taxonomy" id="399599"/>
    <lineage>
        <taxon>Bacteria</taxon>
        <taxon>Pseudomonadati</taxon>
        <taxon>Pseudomonadota</taxon>
        <taxon>Gammaproteobacteria</taxon>
        <taxon>Alteromonadales</taxon>
        <taxon>Shewanellaceae</taxon>
        <taxon>Shewanella</taxon>
    </lineage>
</organism>
<gene>
    <name evidence="1" type="primary">rimK2</name>
    <name type="ordered locus">Sbal195_3945</name>
</gene>
<keyword id="KW-0067">ATP-binding</keyword>
<keyword id="KW-0436">Ligase</keyword>
<keyword id="KW-0460">Magnesium</keyword>
<keyword id="KW-0464">Manganese</keyword>
<keyword id="KW-0479">Metal-binding</keyword>
<keyword id="KW-0547">Nucleotide-binding</keyword>
<keyword id="KW-0648">Protein biosynthesis</keyword>
<accession>A9L4I9</accession>
<sequence length="301" mass="32439">MKIGILSQFPQLYSTQRLVEACQSRGHEAVVINTLNCYMNINSIKPSIHYEGTELVGFDAIIPRIHASVTFYGCAVVRQFEMMGVYAANDSISIARSRDKLRALQLLSRKGIGMPVTGFANKPNDIPDLINMVGGAPLVIKLLEGTQGIGVVLAETKTAAESVIEAFLGLKANILVQEYIKESNGSDIRCFVVGDKVIASMKRQGPEGDFRSNLHLGGCGEVVKITAVERKMAIAAVKAMGLVVAGVDILRSNRGPLILEVNSAPGIEGIEQTTGISVTEPIVEYIEKMVSARKTNRPIIA</sequence>
<comment type="cofactor">
    <cofactor evidence="1">
        <name>Mg(2+)</name>
        <dbReference type="ChEBI" id="CHEBI:18420"/>
    </cofactor>
    <cofactor evidence="1">
        <name>Mn(2+)</name>
        <dbReference type="ChEBI" id="CHEBI:29035"/>
    </cofactor>
    <text evidence="1">Binds 2 magnesium or manganese ions per subunit.</text>
</comment>
<comment type="similarity">
    <text evidence="1">Belongs to the RimK family.</text>
</comment>
<name>RIMK2_SHEB9</name>
<feature type="chain" id="PRO_0000340553" description="Probable alpha-L-glutamate ligase 2">
    <location>
        <begin position="1"/>
        <end position="301"/>
    </location>
</feature>
<feature type="domain" description="ATP-grasp" evidence="1">
    <location>
        <begin position="104"/>
        <end position="287"/>
    </location>
</feature>
<feature type="binding site" evidence="1">
    <location>
        <position position="141"/>
    </location>
    <ligand>
        <name>ATP</name>
        <dbReference type="ChEBI" id="CHEBI:30616"/>
    </ligand>
</feature>
<feature type="binding site" evidence="1">
    <location>
        <begin position="178"/>
        <end position="179"/>
    </location>
    <ligand>
        <name>ATP</name>
        <dbReference type="ChEBI" id="CHEBI:30616"/>
    </ligand>
</feature>
<feature type="binding site" evidence="1">
    <location>
        <position position="187"/>
    </location>
    <ligand>
        <name>ATP</name>
        <dbReference type="ChEBI" id="CHEBI:30616"/>
    </ligand>
</feature>
<feature type="binding site" evidence="1">
    <location>
        <begin position="211"/>
        <end position="213"/>
    </location>
    <ligand>
        <name>ATP</name>
        <dbReference type="ChEBI" id="CHEBI:30616"/>
    </ligand>
</feature>
<feature type="binding site" evidence="1">
    <location>
        <position position="248"/>
    </location>
    <ligand>
        <name>Mg(2+)</name>
        <dbReference type="ChEBI" id="CHEBI:18420"/>
        <label>1</label>
    </ligand>
</feature>
<feature type="binding site" evidence="1">
    <location>
        <position position="248"/>
    </location>
    <ligand>
        <name>Mn(2+)</name>
        <dbReference type="ChEBI" id="CHEBI:29035"/>
        <label>1</label>
    </ligand>
</feature>
<feature type="binding site" evidence="1">
    <location>
        <position position="260"/>
    </location>
    <ligand>
        <name>Mg(2+)</name>
        <dbReference type="ChEBI" id="CHEBI:18420"/>
        <label>1</label>
    </ligand>
</feature>
<feature type="binding site" evidence="1">
    <location>
        <position position="260"/>
    </location>
    <ligand>
        <name>Mg(2+)</name>
        <dbReference type="ChEBI" id="CHEBI:18420"/>
        <label>2</label>
    </ligand>
</feature>
<feature type="binding site" evidence="1">
    <location>
        <position position="260"/>
    </location>
    <ligand>
        <name>Mn(2+)</name>
        <dbReference type="ChEBI" id="CHEBI:29035"/>
        <label>1</label>
    </ligand>
</feature>
<feature type="binding site" evidence="1">
    <location>
        <position position="260"/>
    </location>
    <ligand>
        <name>Mn(2+)</name>
        <dbReference type="ChEBI" id="CHEBI:29035"/>
        <label>2</label>
    </ligand>
</feature>
<feature type="binding site" evidence="1">
    <location>
        <position position="262"/>
    </location>
    <ligand>
        <name>Mg(2+)</name>
        <dbReference type="ChEBI" id="CHEBI:18420"/>
        <label>2</label>
    </ligand>
</feature>
<feature type="binding site" evidence="1">
    <location>
        <position position="262"/>
    </location>
    <ligand>
        <name>Mn(2+)</name>
        <dbReference type="ChEBI" id="CHEBI:29035"/>
        <label>2</label>
    </ligand>
</feature>
<dbReference type="EC" id="6.3.2.-" evidence="1"/>
<dbReference type="EMBL" id="CP000891">
    <property type="protein sequence ID" value="ABX51105.1"/>
    <property type="molecule type" value="Genomic_DNA"/>
</dbReference>
<dbReference type="SMR" id="A9L4I9"/>
<dbReference type="KEGG" id="sbn:Sbal195_3945"/>
<dbReference type="HOGENOM" id="CLU_054353_0_1_6"/>
<dbReference type="Proteomes" id="UP000000770">
    <property type="component" value="Chromosome"/>
</dbReference>
<dbReference type="GO" id="GO:0005737">
    <property type="term" value="C:cytoplasm"/>
    <property type="evidence" value="ECO:0007669"/>
    <property type="project" value="TreeGrafter"/>
</dbReference>
<dbReference type="GO" id="GO:0005524">
    <property type="term" value="F:ATP binding"/>
    <property type="evidence" value="ECO:0007669"/>
    <property type="project" value="UniProtKB-UniRule"/>
</dbReference>
<dbReference type="GO" id="GO:0046872">
    <property type="term" value="F:metal ion binding"/>
    <property type="evidence" value="ECO:0007669"/>
    <property type="project" value="UniProtKB-KW"/>
</dbReference>
<dbReference type="GO" id="GO:0018169">
    <property type="term" value="F:ribosomal S6-glutamic acid ligase activity"/>
    <property type="evidence" value="ECO:0007669"/>
    <property type="project" value="TreeGrafter"/>
</dbReference>
<dbReference type="GO" id="GO:0036211">
    <property type="term" value="P:protein modification process"/>
    <property type="evidence" value="ECO:0007669"/>
    <property type="project" value="InterPro"/>
</dbReference>
<dbReference type="GO" id="GO:0009432">
    <property type="term" value="P:SOS response"/>
    <property type="evidence" value="ECO:0007669"/>
    <property type="project" value="TreeGrafter"/>
</dbReference>
<dbReference type="GO" id="GO:0006412">
    <property type="term" value="P:translation"/>
    <property type="evidence" value="ECO:0007669"/>
    <property type="project" value="UniProtKB-KW"/>
</dbReference>
<dbReference type="FunFam" id="3.40.50.20:FF:000004">
    <property type="entry name" value="Probable alpha-L-glutamate ligase"/>
    <property type="match status" value="1"/>
</dbReference>
<dbReference type="FunFam" id="3.30.1490.20:FF:000005">
    <property type="entry name" value="Probable alpha-L-glutamate ligase 1"/>
    <property type="match status" value="1"/>
</dbReference>
<dbReference type="Gene3D" id="3.40.50.20">
    <property type="match status" value="1"/>
</dbReference>
<dbReference type="Gene3D" id="3.30.1490.20">
    <property type="entry name" value="ATP-grasp fold, A domain"/>
    <property type="match status" value="1"/>
</dbReference>
<dbReference type="Gene3D" id="3.30.470.20">
    <property type="entry name" value="ATP-grasp fold, B domain"/>
    <property type="match status" value="1"/>
</dbReference>
<dbReference type="HAMAP" id="MF_01552">
    <property type="entry name" value="RimK"/>
    <property type="match status" value="1"/>
</dbReference>
<dbReference type="InterPro" id="IPR011761">
    <property type="entry name" value="ATP-grasp"/>
</dbReference>
<dbReference type="InterPro" id="IPR013651">
    <property type="entry name" value="ATP-grasp_RimK-type"/>
</dbReference>
<dbReference type="InterPro" id="IPR013815">
    <property type="entry name" value="ATP_grasp_subdomain_1"/>
</dbReference>
<dbReference type="InterPro" id="IPR023533">
    <property type="entry name" value="RimK"/>
</dbReference>
<dbReference type="InterPro" id="IPR041107">
    <property type="entry name" value="Rimk_N"/>
</dbReference>
<dbReference type="InterPro" id="IPR004666">
    <property type="entry name" value="Rp_bS6_RimK/Lys_biosynth_LsyX"/>
</dbReference>
<dbReference type="NCBIfam" id="NF007764">
    <property type="entry name" value="PRK10446.1"/>
    <property type="match status" value="1"/>
</dbReference>
<dbReference type="NCBIfam" id="TIGR00768">
    <property type="entry name" value="rimK_fam"/>
    <property type="match status" value="1"/>
</dbReference>
<dbReference type="PANTHER" id="PTHR21621:SF7">
    <property type="entry name" value="RIBOSOMAL PROTEIN BS6--L-GLUTAMATE LIGASE"/>
    <property type="match status" value="1"/>
</dbReference>
<dbReference type="PANTHER" id="PTHR21621">
    <property type="entry name" value="RIBOSOMAL PROTEIN S6 MODIFICATION PROTEIN"/>
    <property type="match status" value="1"/>
</dbReference>
<dbReference type="Pfam" id="PF08443">
    <property type="entry name" value="RimK"/>
    <property type="match status" value="1"/>
</dbReference>
<dbReference type="Pfam" id="PF18030">
    <property type="entry name" value="Rimk_N"/>
    <property type="match status" value="1"/>
</dbReference>
<dbReference type="SUPFAM" id="SSF56059">
    <property type="entry name" value="Glutathione synthetase ATP-binding domain-like"/>
    <property type="match status" value="1"/>
</dbReference>
<dbReference type="PROSITE" id="PS50975">
    <property type="entry name" value="ATP_GRASP"/>
    <property type="match status" value="1"/>
</dbReference>
<protein>
    <recommendedName>
        <fullName evidence="1">Probable alpha-L-glutamate ligase 2</fullName>
        <ecNumber evidence="1">6.3.2.-</ecNumber>
    </recommendedName>
</protein>
<reference key="1">
    <citation type="submission" date="2007-11" db="EMBL/GenBank/DDBJ databases">
        <title>Complete sequence of chromosome of Shewanella baltica OS195.</title>
        <authorList>
            <consortium name="US DOE Joint Genome Institute"/>
            <person name="Copeland A."/>
            <person name="Lucas S."/>
            <person name="Lapidus A."/>
            <person name="Barry K."/>
            <person name="Glavina del Rio T."/>
            <person name="Dalin E."/>
            <person name="Tice H."/>
            <person name="Pitluck S."/>
            <person name="Chain P."/>
            <person name="Malfatti S."/>
            <person name="Shin M."/>
            <person name="Vergez L."/>
            <person name="Schmutz J."/>
            <person name="Larimer F."/>
            <person name="Land M."/>
            <person name="Hauser L."/>
            <person name="Kyrpides N."/>
            <person name="Kim E."/>
            <person name="Brettar I."/>
            <person name="Rodrigues J."/>
            <person name="Konstantinidis K."/>
            <person name="Klappenbach J."/>
            <person name="Hofle M."/>
            <person name="Tiedje J."/>
            <person name="Richardson P."/>
        </authorList>
    </citation>
    <scope>NUCLEOTIDE SEQUENCE [LARGE SCALE GENOMIC DNA]</scope>
    <source>
        <strain>OS195</strain>
    </source>
</reference>
<proteinExistence type="inferred from homology"/>